<feature type="chain" id="PRO_0000331340" description="Heme sensor protein HssS">
    <location>
        <begin position="1"/>
        <end position="457"/>
    </location>
</feature>
<feature type="transmembrane region" description="Helical" evidence="2">
    <location>
        <begin position="9"/>
        <end position="29"/>
    </location>
</feature>
<feature type="transmembrane region" description="Helical" evidence="2">
    <location>
        <begin position="164"/>
        <end position="184"/>
    </location>
</feature>
<feature type="domain" description="HAMP" evidence="3">
    <location>
        <begin position="186"/>
        <end position="238"/>
    </location>
</feature>
<feature type="domain" description="Histidine kinase" evidence="4">
    <location>
        <begin position="246"/>
        <end position="456"/>
    </location>
</feature>
<feature type="modified residue" description="Phosphohistidine; by autocatalysis" evidence="4">
    <location>
        <position position="249"/>
    </location>
</feature>
<reference key="1">
    <citation type="submission" date="2007-05" db="EMBL/GenBank/DDBJ databases">
        <title>Complete sequence of chromosome of Staphylococcus aureus subsp. aureus JH9.</title>
        <authorList>
            <consortium name="US DOE Joint Genome Institute"/>
            <person name="Copeland A."/>
            <person name="Lucas S."/>
            <person name="Lapidus A."/>
            <person name="Barry K."/>
            <person name="Detter J.C."/>
            <person name="Glavina del Rio T."/>
            <person name="Hammon N."/>
            <person name="Israni S."/>
            <person name="Pitluck S."/>
            <person name="Chain P."/>
            <person name="Malfatti S."/>
            <person name="Shin M."/>
            <person name="Vergez L."/>
            <person name="Schmutz J."/>
            <person name="Larimer F."/>
            <person name="Land M."/>
            <person name="Hauser L."/>
            <person name="Kyrpides N."/>
            <person name="Kim E."/>
            <person name="Tomasz A."/>
            <person name="Richardson P."/>
        </authorList>
    </citation>
    <scope>NUCLEOTIDE SEQUENCE [LARGE SCALE GENOMIC DNA]</scope>
    <source>
        <strain>JH9</strain>
    </source>
</reference>
<protein>
    <recommendedName>
        <fullName>Heme sensor protein HssS</fullName>
        <ecNumber>2.7.13.3</ecNumber>
    </recommendedName>
</protein>
<evidence type="ECO:0000250" key="1"/>
<evidence type="ECO:0000255" key="2"/>
<evidence type="ECO:0000255" key="3">
    <source>
        <dbReference type="PROSITE-ProRule" id="PRU00102"/>
    </source>
</evidence>
<evidence type="ECO:0000255" key="4">
    <source>
        <dbReference type="PROSITE-ProRule" id="PRU00107"/>
    </source>
</evidence>
<organism>
    <name type="scientific">Staphylococcus aureus (strain JH9)</name>
    <dbReference type="NCBI Taxonomy" id="359786"/>
    <lineage>
        <taxon>Bacteria</taxon>
        <taxon>Bacillati</taxon>
        <taxon>Bacillota</taxon>
        <taxon>Bacilli</taxon>
        <taxon>Bacillales</taxon>
        <taxon>Staphylococcaceae</taxon>
        <taxon>Staphylococcus</taxon>
    </lineage>
</organism>
<dbReference type="EC" id="2.7.13.3"/>
<dbReference type="EMBL" id="CP000703">
    <property type="protein sequence ID" value="ABQ50166.1"/>
    <property type="molecule type" value="Genomic_DNA"/>
</dbReference>
<dbReference type="RefSeq" id="WP_000477338.1">
    <property type="nucleotide sequence ID" value="NC_009487.1"/>
</dbReference>
<dbReference type="SMR" id="A5IVE3"/>
<dbReference type="KEGG" id="saj:SaurJH9_2386"/>
<dbReference type="HOGENOM" id="CLU_000445_89_6_9"/>
<dbReference type="GO" id="GO:0005886">
    <property type="term" value="C:plasma membrane"/>
    <property type="evidence" value="ECO:0007669"/>
    <property type="project" value="UniProtKB-SubCell"/>
</dbReference>
<dbReference type="GO" id="GO:0005524">
    <property type="term" value="F:ATP binding"/>
    <property type="evidence" value="ECO:0007669"/>
    <property type="project" value="UniProtKB-KW"/>
</dbReference>
<dbReference type="GO" id="GO:0000155">
    <property type="term" value="F:phosphorelay sensor kinase activity"/>
    <property type="evidence" value="ECO:0007669"/>
    <property type="project" value="InterPro"/>
</dbReference>
<dbReference type="CDD" id="cd06225">
    <property type="entry name" value="HAMP"/>
    <property type="match status" value="1"/>
</dbReference>
<dbReference type="CDD" id="cd00082">
    <property type="entry name" value="HisKA"/>
    <property type="match status" value="1"/>
</dbReference>
<dbReference type="FunFam" id="3.30.565.10:FF:000090">
    <property type="entry name" value="Heme sensor histidine kinase HssS"/>
    <property type="match status" value="1"/>
</dbReference>
<dbReference type="Gene3D" id="1.10.287.130">
    <property type="match status" value="1"/>
</dbReference>
<dbReference type="Gene3D" id="6.10.340.10">
    <property type="match status" value="1"/>
</dbReference>
<dbReference type="Gene3D" id="3.30.565.10">
    <property type="entry name" value="Histidine kinase-like ATPase, C-terminal domain"/>
    <property type="match status" value="1"/>
</dbReference>
<dbReference type="InterPro" id="IPR050398">
    <property type="entry name" value="Bact_Sensor_His_Kinase"/>
</dbReference>
<dbReference type="InterPro" id="IPR003660">
    <property type="entry name" value="HAMP_dom"/>
</dbReference>
<dbReference type="InterPro" id="IPR036890">
    <property type="entry name" value="HATPase_C_sf"/>
</dbReference>
<dbReference type="InterPro" id="IPR005467">
    <property type="entry name" value="His_kinase_dom"/>
</dbReference>
<dbReference type="InterPro" id="IPR003661">
    <property type="entry name" value="HisK_dim/P_dom"/>
</dbReference>
<dbReference type="InterPro" id="IPR036097">
    <property type="entry name" value="HisK_dim/P_sf"/>
</dbReference>
<dbReference type="InterPro" id="IPR004358">
    <property type="entry name" value="Sig_transdc_His_kin-like_C"/>
</dbReference>
<dbReference type="PANTHER" id="PTHR45528:SF11">
    <property type="entry name" value="HISTIDINE KINASE"/>
    <property type="match status" value="1"/>
</dbReference>
<dbReference type="PANTHER" id="PTHR45528">
    <property type="entry name" value="SENSOR HISTIDINE KINASE CPXA"/>
    <property type="match status" value="1"/>
</dbReference>
<dbReference type="Pfam" id="PF00672">
    <property type="entry name" value="HAMP"/>
    <property type="match status" value="1"/>
</dbReference>
<dbReference type="Pfam" id="PF02518">
    <property type="entry name" value="HATPase_c"/>
    <property type="match status" value="1"/>
</dbReference>
<dbReference type="Pfam" id="PF00512">
    <property type="entry name" value="HisKA"/>
    <property type="match status" value="1"/>
</dbReference>
<dbReference type="PRINTS" id="PR00344">
    <property type="entry name" value="BCTRLSENSOR"/>
</dbReference>
<dbReference type="SMART" id="SM00304">
    <property type="entry name" value="HAMP"/>
    <property type="match status" value="1"/>
</dbReference>
<dbReference type="SMART" id="SM00387">
    <property type="entry name" value="HATPase_c"/>
    <property type="match status" value="1"/>
</dbReference>
<dbReference type="SMART" id="SM00388">
    <property type="entry name" value="HisKA"/>
    <property type="match status" value="1"/>
</dbReference>
<dbReference type="SUPFAM" id="SSF55874">
    <property type="entry name" value="ATPase domain of HSP90 chaperone/DNA topoisomerase II/histidine kinase"/>
    <property type="match status" value="1"/>
</dbReference>
<dbReference type="SUPFAM" id="SSF158472">
    <property type="entry name" value="HAMP domain-like"/>
    <property type="match status" value="1"/>
</dbReference>
<dbReference type="SUPFAM" id="SSF47384">
    <property type="entry name" value="Homodimeric domain of signal transducing histidine kinase"/>
    <property type="match status" value="1"/>
</dbReference>
<dbReference type="PROSITE" id="PS50885">
    <property type="entry name" value="HAMP"/>
    <property type="match status" value="1"/>
</dbReference>
<dbReference type="PROSITE" id="PS50109">
    <property type="entry name" value="HIS_KIN"/>
    <property type="match status" value="1"/>
</dbReference>
<name>HSSS_STAA9</name>
<proteinExistence type="inferred from homology"/>
<keyword id="KW-0067">ATP-binding</keyword>
<keyword id="KW-1003">Cell membrane</keyword>
<keyword id="KW-0418">Kinase</keyword>
<keyword id="KW-0472">Membrane</keyword>
<keyword id="KW-0547">Nucleotide-binding</keyword>
<keyword id="KW-0597">Phosphoprotein</keyword>
<keyword id="KW-0808">Transferase</keyword>
<keyword id="KW-0812">Transmembrane</keyword>
<keyword id="KW-1133">Transmembrane helix</keyword>
<keyword id="KW-0902">Two-component regulatory system</keyword>
<keyword id="KW-0843">Virulence</keyword>
<gene>
    <name type="primary">hssS</name>
    <name type="ordered locus">SaurJH9_2386</name>
</gene>
<sequence>MFKTLYARIAIYSITVILFSALISFVLTNVYYHYNLKASNDAKIMKTLKEARQYEQSAKPTHIQQYFKHLGQMNYQIMTVDQKGHKTFYGEPFREDTLSQNAINNVLNNKDYHGIKDKPFALFVTGFFDNVTDNTVGINFKTKDGSIAVFMRPDIGETFSEFRTFLAVLLMLLLFISISLVIASTYSIIRPVKKLKLATERLIDGDFETPIKQTRKDEIGTLQYHFNKMRESLGQVDQMRQHFVQNVSHEIKTPLTHIHHLLSELQQTSDKTLRQQYINDIYTITTQLSGLTTELLLLSELDNHQHLLFDDKIQVDQLIKDIIRHEQFAADEKSLIILADLESINFLGNQRLLHQALSNLLINAIKYTDVGGAIDIALQHSHNNIIFTISNDGSPISPQAEARLFERFYKVSKHDNSNGLGLAITKSIIELHHGTIQFTQSNEYVTTFTITLPNNSH</sequence>
<comment type="function">
    <text evidence="1">Member of the two-component regulatory system HssS/HssR involved in intracellular heme homeostasis and tempering of staphylococcal virulence. HssS functions as a heme sensor histidine kinase which is autophosphorylated at a histidine residue and transfers its phosphate group to an aspartate residue of HssR. HssR/HssS activates the expression of hrtAB, an efflux pump, in response to extracellular heme, hemin, hemoglobin or blood (By similarity).</text>
</comment>
<comment type="catalytic activity">
    <reaction>
        <text>ATP + protein L-histidine = ADP + protein N-phospho-L-histidine.</text>
        <dbReference type="EC" id="2.7.13.3"/>
    </reaction>
</comment>
<comment type="subcellular location">
    <subcellularLocation>
        <location evidence="1">Cell membrane</location>
        <topology evidence="1">Multi-pass membrane protein</topology>
    </subcellularLocation>
</comment>
<comment type="PTM">
    <text evidence="1">Autophosphorylated.</text>
</comment>
<accession>A5IVE3</accession>